<feature type="chain" id="PRO_0000246775" description="SH2 domain-containing adapter protein E">
    <location>
        <begin position="1"/>
        <end position="495"/>
    </location>
</feature>
<feature type="domain" description="SH2" evidence="2">
    <location>
        <begin position="395"/>
        <end position="490"/>
    </location>
</feature>
<feature type="region of interest" description="Disordered" evidence="3">
    <location>
        <begin position="51"/>
        <end position="190"/>
    </location>
</feature>
<feature type="region of interest" description="Disordered" evidence="3">
    <location>
        <begin position="203"/>
        <end position="233"/>
    </location>
</feature>
<feature type="region of interest" description="Disordered" evidence="3">
    <location>
        <begin position="256"/>
        <end position="327"/>
    </location>
</feature>
<feature type="compositionally biased region" description="Polar residues" evidence="3">
    <location>
        <begin position="135"/>
        <end position="144"/>
    </location>
</feature>
<feature type="compositionally biased region" description="Basic and acidic residues" evidence="3">
    <location>
        <begin position="148"/>
        <end position="157"/>
    </location>
</feature>
<feature type="compositionally biased region" description="Low complexity" evidence="3">
    <location>
        <begin position="162"/>
        <end position="181"/>
    </location>
</feature>
<feature type="compositionally biased region" description="Basic and acidic residues" evidence="3">
    <location>
        <begin position="208"/>
        <end position="224"/>
    </location>
</feature>
<feature type="compositionally biased region" description="Basic and acidic residues" evidence="3">
    <location>
        <begin position="301"/>
        <end position="327"/>
    </location>
</feature>
<feature type="modified residue" description="Phosphoserine" evidence="1">
    <location>
        <position position="107"/>
    </location>
</feature>
<name>SHE_HUMAN</name>
<reference key="1">
    <citation type="journal article" date="2006" name="Nature">
        <title>The DNA sequence and biological annotation of human chromosome 1.</title>
        <authorList>
            <person name="Gregory S.G."/>
            <person name="Barlow K.F."/>
            <person name="McLay K.E."/>
            <person name="Kaul R."/>
            <person name="Swarbreck D."/>
            <person name="Dunham A."/>
            <person name="Scott C.E."/>
            <person name="Howe K.L."/>
            <person name="Woodfine K."/>
            <person name="Spencer C.C.A."/>
            <person name="Jones M.C."/>
            <person name="Gillson C."/>
            <person name="Searle S."/>
            <person name="Zhou Y."/>
            <person name="Kokocinski F."/>
            <person name="McDonald L."/>
            <person name="Evans R."/>
            <person name="Phillips K."/>
            <person name="Atkinson A."/>
            <person name="Cooper R."/>
            <person name="Jones C."/>
            <person name="Hall R.E."/>
            <person name="Andrews T.D."/>
            <person name="Lloyd C."/>
            <person name="Ainscough R."/>
            <person name="Almeida J.P."/>
            <person name="Ambrose K.D."/>
            <person name="Anderson F."/>
            <person name="Andrew R.W."/>
            <person name="Ashwell R.I.S."/>
            <person name="Aubin K."/>
            <person name="Babbage A.K."/>
            <person name="Bagguley C.L."/>
            <person name="Bailey J."/>
            <person name="Beasley H."/>
            <person name="Bethel G."/>
            <person name="Bird C.P."/>
            <person name="Bray-Allen S."/>
            <person name="Brown J.Y."/>
            <person name="Brown A.J."/>
            <person name="Buckley D."/>
            <person name="Burton J."/>
            <person name="Bye J."/>
            <person name="Carder C."/>
            <person name="Chapman J.C."/>
            <person name="Clark S.Y."/>
            <person name="Clarke G."/>
            <person name="Clee C."/>
            <person name="Cobley V."/>
            <person name="Collier R.E."/>
            <person name="Corby N."/>
            <person name="Coville G.J."/>
            <person name="Davies J."/>
            <person name="Deadman R."/>
            <person name="Dunn M."/>
            <person name="Earthrowl M."/>
            <person name="Ellington A.G."/>
            <person name="Errington H."/>
            <person name="Frankish A."/>
            <person name="Frankland J."/>
            <person name="French L."/>
            <person name="Garner P."/>
            <person name="Garnett J."/>
            <person name="Gay L."/>
            <person name="Ghori M.R.J."/>
            <person name="Gibson R."/>
            <person name="Gilby L.M."/>
            <person name="Gillett W."/>
            <person name="Glithero R.J."/>
            <person name="Grafham D.V."/>
            <person name="Griffiths C."/>
            <person name="Griffiths-Jones S."/>
            <person name="Grocock R."/>
            <person name="Hammond S."/>
            <person name="Harrison E.S.I."/>
            <person name="Hart E."/>
            <person name="Haugen E."/>
            <person name="Heath P.D."/>
            <person name="Holmes S."/>
            <person name="Holt K."/>
            <person name="Howden P.J."/>
            <person name="Hunt A.R."/>
            <person name="Hunt S.E."/>
            <person name="Hunter G."/>
            <person name="Isherwood J."/>
            <person name="James R."/>
            <person name="Johnson C."/>
            <person name="Johnson D."/>
            <person name="Joy A."/>
            <person name="Kay M."/>
            <person name="Kershaw J.K."/>
            <person name="Kibukawa M."/>
            <person name="Kimberley A.M."/>
            <person name="King A."/>
            <person name="Knights A.J."/>
            <person name="Lad H."/>
            <person name="Laird G."/>
            <person name="Lawlor S."/>
            <person name="Leongamornlert D.A."/>
            <person name="Lloyd D.M."/>
            <person name="Loveland J."/>
            <person name="Lovell J."/>
            <person name="Lush M.J."/>
            <person name="Lyne R."/>
            <person name="Martin S."/>
            <person name="Mashreghi-Mohammadi M."/>
            <person name="Matthews L."/>
            <person name="Matthews N.S.W."/>
            <person name="McLaren S."/>
            <person name="Milne S."/>
            <person name="Mistry S."/>
            <person name="Moore M.J.F."/>
            <person name="Nickerson T."/>
            <person name="O'Dell C.N."/>
            <person name="Oliver K."/>
            <person name="Palmeiri A."/>
            <person name="Palmer S.A."/>
            <person name="Parker A."/>
            <person name="Patel D."/>
            <person name="Pearce A.V."/>
            <person name="Peck A.I."/>
            <person name="Pelan S."/>
            <person name="Phelps K."/>
            <person name="Phillimore B.J."/>
            <person name="Plumb R."/>
            <person name="Rajan J."/>
            <person name="Raymond C."/>
            <person name="Rouse G."/>
            <person name="Saenphimmachak C."/>
            <person name="Sehra H.K."/>
            <person name="Sheridan E."/>
            <person name="Shownkeen R."/>
            <person name="Sims S."/>
            <person name="Skuce C.D."/>
            <person name="Smith M."/>
            <person name="Steward C."/>
            <person name="Subramanian S."/>
            <person name="Sycamore N."/>
            <person name="Tracey A."/>
            <person name="Tromans A."/>
            <person name="Van Helmond Z."/>
            <person name="Wall M."/>
            <person name="Wallis J.M."/>
            <person name="White S."/>
            <person name="Whitehead S.L."/>
            <person name="Wilkinson J.E."/>
            <person name="Willey D.L."/>
            <person name="Williams H."/>
            <person name="Wilming L."/>
            <person name="Wray P.W."/>
            <person name="Wu Z."/>
            <person name="Coulson A."/>
            <person name="Vaudin M."/>
            <person name="Sulston J.E."/>
            <person name="Durbin R.M."/>
            <person name="Hubbard T."/>
            <person name="Wooster R."/>
            <person name="Dunham I."/>
            <person name="Carter N.P."/>
            <person name="McVean G."/>
            <person name="Ross M.T."/>
            <person name="Harrow J."/>
            <person name="Olson M.V."/>
            <person name="Beck S."/>
            <person name="Rogers J."/>
            <person name="Bentley D.R."/>
        </authorList>
    </citation>
    <scope>NUCLEOTIDE SEQUENCE [LARGE SCALE GENOMIC DNA]</scope>
</reference>
<reference key="2">
    <citation type="journal article" date="2004" name="Genome Res.">
        <title>The status, quality, and expansion of the NIH full-length cDNA project: the Mammalian Gene Collection (MGC).</title>
        <authorList>
            <consortium name="The MGC Project Team"/>
        </authorList>
    </citation>
    <scope>NUCLEOTIDE SEQUENCE [LARGE SCALE MRNA]</scope>
</reference>
<reference key="3">
    <citation type="journal article" date="2003" name="DNA Res.">
        <title>Characterization of long cDNA clones from human adult spleen. II. The complete sequences of 81 cDNA clones.</title>
        <authorList>
            <person name="Jikuya H."/>
            <person name="Takano J."/>
            <person name="Kikuno R."/>
            <person name="Hirosawa M."/>
            <person name="Nagase T."/>
            <person name="Nomura N."/>
            <person name="Ohara O."/>
        </authorList>
    </citation>
    <scope>NUCLEOTIDE SEQUENCE [LARGE SCALE MRNA] OF 187-495</scope>
    <source>
        <tissue>Spleen</tissue>
    </source>
</reference>
<sequence length="495" mass="53950">MQWSPTPGASACLGWASSLACSTAPTLLGRAGRGPLMAAKWFKEFPLNLKTVSERAKPGGGGGKLRKNSEAGGAGPGPGKGRKNSAAELGSGRAGVGPKDSRLSRDSLQGLIQAAAGKGRKNSRATEEEPHRGATKSSGCSTYINRLIKVDTQEKNGKSNYPSSSSSSSSSSSSASSSPSSLGPELDKGKIIKQQETVIILEDYADPYDAKRTKGQRDAERVGENDGYMEPYDAQQMITEIRRRGSKDPLVKALQLLDSPCEPADGGLKSETLAKRRSSKDLLGKPPQLYDTPYEPAEGGPRAEGKARPPDSRLPENDERPAAEYEQPWEWKKEQIVRALSVQFEGAERPSFREETVRQHHRQKSWTQKILKPALSDHSEGEKVDPGLPLEKQPWYHGAISRAEAESRLQPCKEAGYLVRNSESGNSRYSIALKTSQGCVHIIVAQTKDNKYTLNQTSAVFDSIPEVVHYYSNEKLPFKGAEHMTLLYPVHSKLH</sequence>
<protein>
    <recommendedName>
        <fullName>SH2 domain-containing adapter protein E</fullName>
    </recommendedName>
</protein>
<evidence type="ECO:0000250" key="1">
    <source>
        <dbReference type="UniProtKB" id="Q8BSD5"/>
    </source>
</evidence>
<evidence type="ECO:0000255" key="2">
    <source>
        <dbReference type="PROSITE-ProRule" id="PRU00191"/>
    </source>
</evidence>
<evidence type="ECO:0000256" key="3">
    <source>
        <dbReference type="SAM" id="MobiDB-lite"/>
    </source>
</evidence>
<dbReference type="EMBL" id="AL162591">
    <property type="status" value="NOT_ANNOTATED_CDS"/>
    <property type="molecule type" value="Genomic_DNA"/>
</dbReference>
<dbReference type="EMBL" id="BC117210">
    <property type="protein sequence ID" value="AAI17211.1"/>
    <property type="molecule type" value="mRNA"/>
</dbReference>
<dbReference type="EMBL" id="AK074067">
    <property type="protein sequence ID" value="BAB84893.1"/>
    <property type="molecule type" value="mRNA"/>
</dbReference>
<dbReference type="CCDS" id="CCDS30877.1"/>
<dbReference type="RefSeq" id="NP_001010846.1">
    <property type="nucleotide sequence ID" value="NM_001010846.3"/>
</dbReference>
<dbReference type="RefSeq" id="XP_011507465.1">
    <property type="nucleotide sequence ID" value="XM_011509163.4"/>
</dbReference>
<dbReference type="RefSeq" id="XP_054190220.1">
    <property type="nucleotide sequence ID" value="XM_054334245.1"/>
</dbReference>
<dbReference type="SMR" id="Q5VZ18"/>
<dbReference type="BioGRID" id="126009">
    <property type="interactions" value="8"/>
</dbReference>
<dbReference type="FunCoup" id="Q5VZ18">
    <property type="interactions" value="760"/>
</dbReference>
<dbReference type="IntAct" id="Q5VZ18">
    <property type="interactions" value="6"/>
</dbReference>
<dbReference type="STRING" id="9606.ENSP00000307369"/>
<dbReference type="GlyGen" id="Q5VZ18">
    <property type="glycosylation" value="3 sites, 1 O-linked glycan (2 sites)"/>
</dbReference>
<dbReference type="iPTMnet" id="Q5VZ18"/>
<dbReference type="PhosphoSitePlus" id="Q5VZ18"/>
<dbReference type="BioMuta" id="SHE"/>
<dbReference type="DMDM" id="74747744"/>
<dbReference type="MassIVE" id="Q5VZ18"/>
<dbReference type="PaxDb" id="9606-ENSP00000307369"/>
<dbReference type="PeptideAtlas" id="Q5VZ18"/>
<dbReference type="ProteomicsDB" id="65663"/>
<dbReference type="Antibodypedia" id="51057">
    <property type="antibodies" value="42 antibodies from 14 providers"/>
</dbReference>
<dbReference type="DNASU" id="126669"/>
<dbReference type="Ensembl" id="ENST00000304760.3">
    <property type="protein sequence ID" value="ENSP00000307369.2"/>
    <property type="gene ID" value="ENSG00000169291.10"/>
</dbReference>
<dbReference type="GeneID" id="126669"/>
<dbReference type="KEGG" id="hsa:126669"/>
<dbReference type="MANE-Select" id="ENST00000304760.3">
    <property type="protein sequence ID" value="ENSP00000307369.2"/>
    <property type="RefSeq nucleotide sequence ID" value="NM_001010846.3"/>
    <property type="RefSeq protein sequence ID" value="NP_001010846.1"/>
</dbReference>
<dbReference type="UCSC" id="uc001ffb.4">
    <property type="organism name" value="human"/>
</dbReference>
<dbReference type="AGR" id="HGNC:27004"/>
<dbReference type="CTD" id="126669"/>
<dbReference type="DisGeNET" id="126669"/>
<dbReference type="GeneCards" id="SHE"/>
<dbReference type="HGNC" id="HGNC:27004">
    <property type="gene designation" value="SHE"/>
</dbReference>
<dbReference type="HPA" id="ENSG00000169291">
    <property type="expression patterns" value="Low tissue specificity"/>
</dbReference>
<dbReference type="MIM" id="610482">
    <property type="type" value="gene"/>
</dbReference>
<dbReference type="neXtProt" id="NX_Q5VZ18"/>
<dbReference type="OpenTargets" id="ENSG00000169291"/>
<dbReference type="PharmGKB" id="PA142670919"/>
<dbReference type="VEuPathDB" id="HostDB:ENSG00000169291"/>
<dbReference type="eggNOG" id="ENOG502R9PR">
    <property type="taxonomic scope" value="Eukaryota"/>
</dbReference>
<dbReference type="GeneTree" id="ENSGT00940000159107"/>
<dbReference type="HOGENOM" id="CLU_029444_5_0_1"/>
<dbReference type="InParanoid" id="Q5VZ18"/>
<dbReference type="OMA" id="WFKEFPM"/>
<dbReference type="OrthoDB" id="5914531at2759"/>
<dbReference type="PAN-GO" id="Q5VZ18">
    <property type="GO annotations" value="1 GO annotation based on evolutionary models"/>
</dbReference>
<dbReference type="PhylomeDB" id="Q5VZ18"/>
<dbReference type="TreeFam" id="TF325799"/>
<dbReference type="PathwayCommons" id="Q5VZ18"/>
<dbReference type="SignaLink" id="Q5VZ18"/>
<dbReference type="BioGRID-ORCS" id="126669">
    <property type="hits" value="28 hits in 1137 CRISPR screens"/>
</dbReference>
<dbReference type="ChiTaRS" id="SHE">
    <property type="organism name" value="human"/>
</dbReference>
<dbReference type="GenomeRNAi" id="126669"/>
<dbReference type="Pharos" id="Q5VZ18">
    <property type="development level" value="Tdark"/>
</dbReference>
<dbReference type="PRO" id="PR:Q5VZ18"/>
<dbReference type="Proteomes" id="UP000005640">
    <property type="component" value="Chromosome 1"/>
</dbReference>
<dbReference type="RNAct" id="Q5VZ18">
    <property type="molecule type" value="protein"/>
</dbReference>
<dbReference type="Bgee" id="ENSG00000169291">
    <property type="expression patterns" value="Expressed in cardiac muscle of right atrium and 171 other cell types or tissues"/>
</dbReference>
<dbReference type="ExpressionAtlas" id="Q5VZ18">
    <property type="expression patterns" value="baseline and differential"/>
</dbReference>
<dbReference type="GO" id="GO:0001784">
    <property type="term" value="F:phosphotyrosine residue binding"/>
    <property type="evidence" value="ECO:0000318"/>
    <property type="project" value="GO_Central"/>
</dbReference>
<dbReference type="CDD" id="cd10391">
    <property type="entry name" value="SH2_SHE"/>
    <property type="match status" value="1"/>
</dbReference>
<dbReference type="FunFam" id="3.30.505.10:FF:000067">
    <property type="entry name" value="Src homology 2 domain-containing E"/>
    <property type="match status" value="1"/>
</dbReference>
<dbReference type="Gene3D" id="3.30.505.10">
    <property type="entry name" value="SH2 domain"/>
    <property type="match status" value="1"/>
</dbReference>
<dbReference type="InterPro" id="IPR000980">
    <property type="entry name" value="SH2"/>
</dbReference>
<dbReference type="InterPro" id="IPR036860">
    <property type="entry name" value="SH2_dom_sf"/>
</dbReference>
<dbReference type="InterPro" id="IPR051846">
    <property type="entry name" value="SH2_domain_adapters"/>
</dbReference>
<dbReference type="InterPro" id="IPR035042">
    <property type="entry name" value="SHE_SH2"/>
</dbReference>
<dbReference type="PANTHER" id="PTHR15127">
    <property type="entry name" value="HEAVYWEIGHT, ISOFORM A"/>
    <property type="match status" value="1"/>
</dbReference>
<dbReference type="PANTHER" id="PTHR15127:SF29">
    <property type="entry name" value="SH2 DOMAIN-CONTAINING ADAPTER PROTEIN E"/>
    <property type="match status" value="1"/>
</dbReference>
<dbReference type="Pfam" id="PF00017">
    <property type="entry name" value="SH2"/>
    <property type="match status" value="1"/>
</dbReference>
<dbReference type="PRINTS" id="PR00401">
    <property type="entry name" value="SH2DOMAIN"/>
</dbReference>
<dbReference type="SMART" id="SM00252">
    <property type="entry name" value="SH2"/>
    <property type="match status" value="1"/>
</dbReference>
<dbReference type="SUPFAM" id="SSF55550">
    <property type="entry name" value="SH2 domain"/>
    <property type="match status" value="1"/>
</dbReference>
<dbReference type="PROSITE" id="PS50001">
    <property type="entry name" value="SH2"/>
    <property type="match status" value="1"/>
</dbReference>
<comment type="interaction">
    <interactant intactId="EBI-3956977">
        <id>Q5VZ18</id>
    </interactant>
    <interactant intactId="EBI-608057">
        <id>P10275</id>
        <label>AR</label>
    </interactant>
    <organismsDiffer>false</organismsDiffer>
    <experiments>3</experiments>
</comment>
<comment type="interaction">
    <interactant intactId="EBI-3956977">
        <id>Q5VZ18</id>
    </interactant>
    <interactant intactId="EBI-741101">
        <id>Q13643</id>
        <label>FHL3</label>
    </interactant>
    <organismsDiffer>false</organismsDiffer>
    <experiments>3</experiments>
</comment>
<organism>
    <name type="scientific">Homo sapiens</name>
    <name type="common">Human</name>
    <dbReference type="NCBI Taxonomy" id="9606"/>
    <lineage>
        <taxon>Eukaryota</taxon>
        <taxon>Metazoa</taxon>
        <taxon>Chordata</taxon>
        <taxon>Craniata</taxon>
        <taxon>Vertebrata</taxon>
        <taxon>Euteleostomi</taxon>
        <taxon>Mammalia</taxon>
        <taxon>Eutheria</taxon>
        <taxon>Euarchontoglires</taxon>
        <taxon>Primates</taxon>
        <taxon>Haplorrhini</taxon>
        <taxon>Catarrhini</taxon>
        <taxon>Hominidae</taxon>
        <taxon>Homo</taxon>
    </lineage>
</organism>
<gene>
    <name type="primary">SHE</name>
</gene>
<accession>Q5VZ18</accession>
<accession>Q8TEQ5</accession>
<proteinExistence type="evidence at protein level"/>
<keyword id="KW-0597">Phosphoprotein</keyword>
<keyword id="KW-1267">Proteomics identification</keyword>
<keyword id="KW-1185">Reference proteome</keyword>
<keyword id="KW-0727">SH2 domain</keyword>